<accession>B2U7R1</accession>
<reference key="1">
    <citation type="submission" date="2008-05" db="EMBL/GenBank/DDBJ databases">
        <title>Complete sequence of chromosome 1 of Ralstonia pickettii 12J.</title>
        <authorList>
            <person name="Lucas S."/>
            <person name="Copeland A."/>
            <person name="Lapidus A."/>
            <person name="Glavina del Rio T."/>
            <person name="Dalin E."/>
            <person name="Tice H."/>
            <person name="Bruce D."/>
            <person name="Goodwin L."/>
            <person name="Pitluck S."/>
            <person name="Meincke L."/>
            <person name="Brettin T."/>
            <person name="Detter J.C."/>
            <person name="Han C."/>
            <person name="Kuske C.R."/>
            <person name="Schmutz J."/>
            <person name="Larimer F."/>
            <person name="Land M."/>
            <person name="Hauser L."/>
            <person name="Kyrpides N."/>
            <person name="Mikhailova N."/>
            <person name="Marsh T."/>
            <person name="Richardson P."/>
        </authorList>
    </citation>
    <scope>NUCLEOTIDE SEQUENCE [LARGE SCALE GENOMIC DNA]</scope>
    <source>
        <strain>12J</strain>
    </source>
</reference>
<protein>
    <recommendedName>
        <fullName evidence="1">NADH-quinone oxidoreductase subunit A</fullName>
        <ecNumber evidence="1">7.1.1.-</ecNumber>
    </recommendedName>
    <alternativeName>
        <fullName evidence="1">NADH dehydrogenase I subunit A</fullName>
    </alternativeName>
    <alternativeName>
        <fullName evidence="1">NDH-1 subunit A</fullName>
    </alternativeName>
    <alternativeName>
        <fullName evidence="1">NUO1</fullName>
    </alternativeName>
</protein>
<evidence type="ECO:0000255" key="1">
    <source>
        <dbReference type="HAMAP-Rule" id="MF_01394"/>
    </source>
</evidence>
<keyword id="KW-0997">Cell inner membrane</keyword>
<keyword id="KW-1003">Cell membrane</keyword>
<keyword id="KW-0472">Membrane</keyword>
<keyword id="KW-0520">NAD</keyword>
<keyword id="KW-0874">Quinone</keyword>
<keyword id="KW-1278">Translocase</keyword>
<keyword id="KW-0812">Transmembrane</keyword>
<keyword id="KW-1133">Transmembrane helix</keyword>
<keyword id="KW-0813">Transport</keyword>
<keyword id="KW-0830">Ubiquinone</keyword>
<comment type="function">
    <text evidence="1">NDH-1 shuttles electrons from NADH, via FMN and iron-sulfur (Fe-S) centers, to quinones in the respiratory chain. The immediate electron acceptor for the enzyme in this species is believed to be ubiquinone. Couples the redox reaction to proton translocation (for every two electrons transferred, four hydrogen ions are translocated across the cytoplasmic membrane), and thus conserves the redox energy in a proton gradient.</text>
</comment>
<comment type="catalytic activity">
    <reaction evidence="1">
        <text>a quinone + NADH + 5 H(+)(in) = a quinol + NAD(+) + 4 H(+)(out)</text>
        <dbReference type="Rhea" id="RHEA:57888"/>
        <dbReference type="ChEBI" id="CHEBI:15378"/>
        <dbReference type="ChEBI" id="CHEBI:24646"/>
        <dbReference type="ChEBI" id="CHEBI:57540"/>
        <dbReference type="ChEBI" id="CHEBI:57945"/>
        <dbReference type="ChEBI" id="CHEBI:132124"/>
    </reaction>
</comment>
<comment type="subunit">
    <text evidence="1">NDH-1 is composed of 14 different subunits. Subunits NuoA, H, J, K, L, M, N constitute the membrane sector of the complex.</text>
</comment>
<comment type="subcellular location">
    <subcellularLocation>
        <location evidence="1">Cell inner membrane</location>
        <topology evidence="1">Multi-pass membrane protein</topology>
    </subcellularLocation>
</comment>
<comment type="similarity">
    <text evidence="1">Belongs to the complex I subunit 3 family.</text>
</comment>
<sequence length="119" mass="13584">MNLEAYFPVLLFIVVGVGLGLALMTIGRVLGPNNPDPDKLSPYECGFEAFEDARMKFDVRYYLIAILFILFDLETAFLFPWGVALREIGWPGFFAMGVFLLEFLVGFVYIWKKGALDWE</sequence>
<gene>
    <name evidence="1" type="primary">nuoA</name>
    <name type="ordered locus">Rpic_2214</name>
</gene>
<feature type="chain" id="PRO_0000362752" description="NADH-quinone oxidoreductase subunit A">
    <location>
        <begin position="1"/>
        <end position="119"/>
    </location>
</feature>
<feature type="transmembrane region" description="Helical" evidence="1">
    <location>
        <begin position="7"/>
        <end position="27"/>
    </location>
</feature>
<feature type="transmembrane region" description="Helical" evidence="1">
    <location>
        <begin position="63"/>
        <end position="83"/>
    </location>
</feature>
<feature type="transmembrane region" description="Helical" evidence="1">
    <location>
        <begin position="88"/>
        <end position="108"/>
    </location>
</feature>
<proteinExistence type="inferred from homology"/>
<dbReference type="EC" id="7.1.1.-" evidence="1"/>
<dbReference type="EMBL" id="CP001068">
    <property type="protein sequence ID" value="ACD27348.1"/>
    <property type="molecule type" value="Genomic_DNA"/>
</dbReference>
<dbReference type="SMR" id="B2U7R1"/>
<dbReference type="STRING" id="402626.Rpic_2214"/>
<dbReference type="KEGG" id="rpi:Rpic_2214"/>
<dbReference type="eggNOG" id="COG0838">
    <property type="taxonomic scope" value="Bacteria"/>
</dbReference>
<dbReference type="HOGENOM" id="CLU_119549_3_1_4"/>
<dbReference type="GO" id="GO:0030964">
    <property type="term" value="C:NADH dehydrogenase complex"/>
    <property type="evidence" value="ECO:0007669"/>
    <property type="project" value="TreeGrafter"/>
</dbReference>
<dbReference type="GO" id="GO:0005886">
    <property type="term" value="C:plasma membrane"/>
    <property type="evidence" value="ECO:0007669"/>
    <property type="project" value="UniProtKB-SubCell"/>
</dbReference>
<dbReference type="GO" id="GO:0008137">
    <property type="term" value="F:NADH dehydrogenase (ubiquinone) activity"/>
    <property type="evidence" value="ECO:0007669"/>
    <property type="project" value="InterPro"/>
</dbReference>
<dbReference type="GO" id="GO:0050136">
    <property type="term" value="F:NADH:ubiquinone reductase (non-electrogenic) activity"/>
    <property type="evidence" value="ECO:0007669"/>
    <property type="project" value="UniProtKB-UniRule"/>
</dbReference>
<dbReference type="GO" id="GO:0048038">
    <property type="term" value="F:quinone binding"/>
    <property type="evidence" value="ECO:0007669"/>
    <property type="project" value="UniProtKB-KW"/>
</dbReference>
<dbReference type="FunFam" id="1.20.58.1610:FF:000004">
    <property type="entry name" value="NADH-quinone oxidoreductase subunit A"/>
    <property type="match status" value="1"/>
</dbReference>
<dbReference type="Gene3D" id="1.20.58.1610">
    <property type="entry name" value="NADH:ubiquinone/plastoquinone oxidoreductase, chain 3"/>
    <property type="match status" value="1"/>
</dbReference>
<dbReference type="HAMAP" id="MF_01394">
    <property type="entry name" value="NDH1_NuoA"/>
    <property type="match status" value="1"/>
</dbReference>
<dbReference type="InterPro" id="IPR023043">
    <property type="entry name" value="NAD(P)H_OxRDtase_bac/plastid"/>
</dbReference>
<dbReference type="InterPro" id="IPR000440">
    <property type="entry name" value="NADH_UbQ/plastoQ_OxRdtase_su3"/>
</dbReference>
<dbReference type="InterPro" id="IPR038430">
    <property type="entry name" value="NDAH_ubi_oxred_su3_sf"/>
</dbReference>
<dbReference type="PANTHER" id="PTHR11058">
    <property type="entry name" value="NADH-UBIQUINONE OXIDOREDUCTASE CHAIN 3"/>
    <property type="match status" value="1"/>
</dbReference>
<dbReference type="PANTHER" id="PTHR11058:SF9">
    <property type="entry name" value="NADH-UBIQUINONE OXIDOREDUCTASE CHAIN 3"/>
    <property type="match status" value="1"/>
</dbReference>
<dbReference type="Pfam" id="PF00507">
    <property type="entry name" value="Oxidored_q4"/>
    <property type="match status" value="1"/>
</dbReference>
<name>NUOA_RALPJ</name>
<organism>
    <name type="scientific">Ralstonia pickettii (strain 12J)</name>
    <dbReference type="NCBI Taxonomy" id="402626"/>
    <lineage>
        <taxon>Bacteria</taxon>
        <taxon>Pseudomonadati</taxon>
        <taxon>Pseudomonadota</taxon>
        <taxon>Betaproteobacteria</taxon>
        <taxon>Burkholderiales</taxon>
        <taxon>Burkholderiaceae</taxon>
        <taxon>Ralstonia</taxon>
    </lineage>
</organism>